<feature type="chain" id="PRO_0000065139" description="Uncharacterized protein C05B5.2">
    <location>
        <begin position="1"/>
        <end position="185"/>
    </location>
</feature>
<feature type="transmembrane region" description="Helical" evidence="1">
    <location>
        <begin position="1"/>
        <end position="19"/>
    </location>
</feature>
<feature type="transmembrane region" description="Helical" evidence="1">
    <location>
        <begin position="105"/>
        <end position="125"/>
    </location>
</feature>
<sequence>MLNIVLIIGLLAIFNTSSASNDVCHVTRKPLMLPAPGDVYKKAVQFYSNITAPRSTSVLAPVMSSLEVYINTTTTSAFAPAQSIKVADILEEDADAIRVKSIRMAGFIAQCIIFLFVYTIVTMDVEIWKINMDWLKIQYFQHFEDSAAEVPVFKLYMAREIQTCPLPARQNVMIVRQFMEMESNC</sequence>
<gene>
    <name type="ORF">C05B5.2</name>
</gene>
<dbReference type="EMBL" id="Z32679">
    <property type="protein sequence ID" value="CAA83592.2"/>
    <property type="molecule type" value="Genomic_DNA"/>
</dbReference>
<dbReference type="PIR" id="D88571">
    <property type="entry name" value="D88571"/>
</dbReference>
<dbReference type="PIR" id="S43571">
    <property type="entry name" value="S43571"/>
</dbReference>
<dbReference type="RefSeq" id="NP_499218.2">
    <property type="nucleotide sequence ID" value="NM_066817.6"/>
</dbReference>
<dbReference type="FunCoup" id="P34290">
    <property type="interactions" value="452"/>
</dbReference>
<dbReference type="STRING" id="6239.C05B5.2.1"/>
<dbReference type="PaxDb" id="6239-C05B5.2"/>
<dbReference type="EnsemblMetazoa" id="C05B5.2.1">
    <property type="protein sequence ID" value="C05B5.2.1"/>
    <property type="gene ID" value="WBGene00007320"/>
</dbReference>
<dbReference type="GeneID" id="176412"/>
<dbReference type="KEGG" id="cel:CELE_C05B5.2"/>
<dbReference type="UCSC" id="C05B5.2">
    <property type="organism name" value="c. elegans"/>
</dbReference>
<dbReference type="AGR" id="WB:WBGene00007320"/>
<dbReference type="CTD" id="176412"/>
<dbReference type="WormBase" id="C05B5.2">
    <property type="protein sequence ID" value="CE47036"/>
    <property type="gene ID" value="WBGene00007320"/>
</dbReference>
<dbReference type="eggNOG" id="ENOG502TIK7">
    <property type="taxonomic scope" value="Eukaryota"/>
</dbReference>
<dbReference type="GeneTree" id="ENSGT00970000196900"/>
<dbReference type="HOGENOM" id="CLU_1604219_0_0_1"/>
<dbReference type="InParanoid" id="P34290"/>
<dbReference type="OrthoDB" id="5858095at2759"/>
<dbReference type="PhylomeDB" id="P34290"/>
<dbReference type="PRO" id="PR:P34290"/>
<dbReference type="Proteomes" id="UP000001940">
    <property type="component" value="Chromosome III"/>
</dbReference>
<dbReference type="Bgee" id="WBGene00007320">
    <property type="expression patterns" value="Expressed in adult organism and 1 other cell type or tissue"/>
</dbReference>
<dbReference type="GO" id="GO:0016020">
    <property type="term" value="C:membrane"/>
    <property type="evidence" value="ECO:0007669"/>
    <property type="project" value="UniProtKB-SubCell"/>
</dbReference>
<comment type="subcellular location">
    <subcellularLocation>
        <location evidence="2">Membrane</location>
        <topology evidence="2">Multi-pass membrane protein</topology>
    </subcellularLocation>
</comment>
<evidence type="ECO:0000255" key="1"/>
<evidence type="ECO:0000305" key="2"/>
<keyword id="KW-0472">Membrane</keyword>
<keyword id="KW-1185">Reference proteome</keyword>
<keyword id="KW-0812">Transmembrane</keyword>
<keyword id="KW-1133">Transmembrane helix</keyword>
<name>YKO2_CAEEL</name>
<reference key="1">
    <citation type="journal article" date="1998" name="Science">
        <title>Genome sequence of the nematode C. elegans: a platform for investigating biology.</title>
        <authorList>
            <consortium name="The C. elegans sequencing consortium"/>
        </authorList>
    </citation>
    <scope>NUCLEOTIDE SEQUENCE [LARGE SCALE GENOMIC DNA]</scope>
    <source>
        <strain>Bristol N2</strain>
    </source>
</reference>
<protein>
    <recommendedName>
        <fullName>Uncharacterized protein C05B5.2</fullName>
    </recommendedName>
</protein>
<proteinExistence type="predicted"/>
<organism>
    <name type="scientific">Caenorhabditis elegans</name>
    <dbReference type="NCBI Taxonomy" id="6239"/>
    <lineage>
        <taxon>Eukaryota</taxon>
        <taxon>Metazoa</taxon>
        <taxon>Ecdysozoa</taxon>
        <taxon>Nematoda</taxon>
        <taxon>Chromadorea</taxon>
        <taxon>Rhabditida</taxon>
        <taxon>Rhabditina</taxon>
        <taxon>Rhabditomorpha</taxon>
        <taxon>Rhabditoidea</taxon>
        <taxon>Rhabditidae</taxon>
        <taxon>Peloderinae</taxon>
        <taxon>Caenorhabditis</taxon>
    </lineage>
</organism>
<accession>P34290</accession>